<comment type="function">
    <text evidence="1">Part of the Sec protein translocase complex. Interacts with the SecYEG preprotein conducting channel. Has a central role in coupling the hydrolysis of ATP to the transfer of proteins into and across the cell membrane, serving as an ATP-driven molecular motor driving the stepwise translocation of polypeptide chains across the membrane.</text>
</comment>
<comment type="catalytic activity">
    <reaction evidence="1">
        <text>ATP + H2O + cellular proteinSide 1 = ADP + phosphate + cellular proteinSide 2.</text>
        <dbReference type="EC" id="7.4.2.8"/>
    </reaction>
</comment>
<comment type="cofactor">
    <cofactor evidence="1">
        <name>Zn(2+)</name>
        <dbReference type="ChEBI" id="CHEBI:29105"/>
    </cofactor>
    <text evidence="1">May bind 1 zinc ion per subunit.</text>
</comment>
<comment type="subunit">
    <text evidence="1">Monomer and homodimer. Part of the essential Sec protein translocation apparatus which comprises SecA, SecYEG and auxiliary proteins SecDF-YajC and YidC.</text>
</comment>
<comment type="subcellular location">
    <subcellularLocation>
        <location evidence="1">Cell inner membrane</location>
        <topology evidence="1">Peripheral membrane protein</topology>
        <orientation evidence="1">Cytoplasmic side</orientation>
    </subcellularLocation>
    <subcellularLocation>
        <location evidence="1">Cytoplasm</location>
    </subcellularLocation>
    <text evidence="1">Distribution is 50-50.</text>
</comment>
<comment type="similarity">
    <text evidence="1">Belongs to the SecA family.</text>
</comment>
<protein>
    <recommendedName>
        <fullName evidence="1">Protein translocase subunit SecA</fullName>
        <ecNumber evidence="1">7.4.2.8</ecNumber>
    </recommendedName>
</protein>
<sequence length="865" mass="99045">MIKAIIGKIIGTRNDRWIKQYKKKVLAINALEPTYEKMSDDELQNAFEELKKRVRSVEKDLQEKTLLEVLPESFAITREASKRILKMRHFDVQLIGGMVLNDGKIAEMKTGEGKTLVATLAVALNALKGESVYVVTVNDYLAHRDSKEMEPLYHFLGYSVGTITASVRDDDERLEIYSKDIVYGTNNEFGFDYLRDNMKYSLEHKVQKSHAFAIVDEVDSILIDEARTPLIISGPVDRRMENYNKADEVAKSMQVEIDFTIDEKNRTILITEEGIKKAENLFGVDNLYKIENAALSHHLDQALKANYLFFIDKDYIVANNEVVIVDEFTGRLSEGRRFSEGLHQALEAKEGVSIKEESQTLADITFQNYFRMFSKLAGMTGTAQTEATEFLEIYNLEVVSIPTNLAIKRKDLNDLIYKSEKEKFDAVILKIKELHDKGQPVLVGTASIEKSETLHALLKKERIPHTVLNAKQHTKEAEIIKDAGLKGAVTIATNMAGRGVDIKLTDEIKELGGLYIIGTERHESRRIDNQLRGRSGRQGDPGTSQFYLSLEDNLLRIFGSDRIKGVMEKLGLKDGEHIESKLVTRAVENAQKKVENLHFESRKHLLEYDDVANEQRKSVYKFRDELLDVNYDISAKIAENREYALNQIFSKLKAFDHQNLSEEELLGLKNILKEDFNAHVGLEDLKKASPIENFIAEKLKSDYENKMKVLDSEQRSRIERIVYLQILDNAWREHLYTMDNLKTGINLRGYNQKDPLVEYKKESYNLFLELIEDIKMEAIKTFSKIQFEDEQDSSDAERYLDNFSEEREHESVTYRHEEALDEDLNVAMKAFAKTPKRNEPCPCGSGKKYKDCCAKSGPKKGLFAK</sequence>
<gene>
    <name evidence="1" type="primary">secA</name>
    <name type="ordered locus">HPSH_02880</name>
</gene>
<reference key="1">
    <citation type="submission" date="2008-05" db="EMBL/GenBank/DDBJ databases">
        <title>Genome sequence of Helicobacter pylori from the remote Amazon: traces of Asian ancestry of the first Americans.</title>
        <authorList>
            <person name="Kersulyte D."/>
            <person name="Kalia A."/>
            <person name="Gilman R.H."/>
            <person name="Berg D.E."/>
        </authorList>
    </citation>
    <scope>NUCLEOTIDE SEQUENCE [LARGE SCALE GENOMIC DNA]</scope>
    <source>
        <strain>Shi470</strain>
    </source>
</reference>
<name>SECA_HELPS</name>
<feature type="chain" id="PRO_1000145023" description="Protein translocase subunit SecA">
    <location>
        <begin position="1"/>
        <end position="865"/>
    </location>
</feature>
<feature type="binding site" evidence="1">
    <location>
        <position position="93"/>
    </location>
    <ligand>
        <name>ATP</name>
        <dbReference type="ChEBI" id="CHEBI:30616"/>
    </ligand>
</feature>
<feature type="binding site" evidence="1">
    <location>
        <begin position="111"/>
        <end position="115"/>
    </location>
    <ligand>
        <name>ATP</name>
        <dbReference type="ChEBI" id="CHEBI:30616"/>
    </ligand>
</feature>
<feature type="binding site" evidence="1">
    <location>
        <position position="501"/>
    </location>
    <ligand>
        <name>ATP</name>
        <dbReference type="ChEBI" id="CHEBI:30616"/>
    </ligand>
</feature>
<feature type="binding site" evidence="1">
    <location>
        <position position="841"/>
    </location>
    <ligand>
        <name>Zn(2+)</name>
        <dbReference type="ChEBI" id="CHEBI:29105"/>
    </ligand>
</feature>
<feature type="binding site" evidence="1">
    <location>
        <position position="843"/>
    </location>
    <ligand>
        <name>Zn(2+)</name>
        <dbReference type="ChEBI" id="CHEBI:29105"/>
    </ligand>
</feature>
<feature type="binding site" evidence="1">
    <location>
        <position position="852"/>
    </location>
    <ligand>
        <name>Zn(2+)</name>
        <dbReference type="ChEBI" id="CHEBI:29105"/>
    </ligand>
</feature>
<feature type="binding site" evidence="1">
    <location>
        <position position="853"/>
    </location>
    <ligand>
        <name>Zn(2+)</name>
        <dbReference type="ChEBI" id="CHEBI:29105"/>
    </ligand>
</feature>
<accession>B2UT44</accession>
<dbReference type="EC" id="7.4.2.8" evidence="1"/>
<dbReference type="EMBL" id="CP001072">
    <property type="protein sequence ID" value="ACD48026.1"/>
    <property type="molecule type" value="Genomic_DNA"/>
</dbReference>
<dbReference type="RefSeq" id="WP_000588080.1">
    <property type="nucleotide sequence ID" value="NC_010698.2"/>
</dbReference>
<dbReference type="SMR" id="B2UT44"/>
<dbReference type="KEGG" id="hps:HPSH_02880"/>
<dbReference type="HOGENOM" id="CLU_005314_3_0_7"/>
<dbReference type="GO" id="GO:0031522">
    <property type="term" value="C:cell envelope Sec protein transport complex"/>
    <property type="evidence" value="ECO:0007669"/>
    <property type="project" value="TreeGrafter"/>
</dbReference>
<dbReference type="GO" id="GO:0005829">
    <property type="term" value="C:cytosol"/>
    <property type="evidence" value="ECO:0007669"/>
    <property type="project" value="TreeGrafter"/>
</dbReference>
<dbReference type="GO" id="GO:0005886">
    <property type="term" value="C:plasma membrane"/>
    <property type="evidence" value="ECO:0007669"/>
    <property type="project" value="UniProtKB-SubCell"/>
</dbReference>
<dbReference type="GO" id="GO:0005524">
    <property type="term" value="F:ATP binding"/>
    <property type="evidence" value="ECO:0007669"/>
    <property type="project" value="UniProtKB-UniRule"/>
</dbReference>
<dbReference type="GO" id="GO:0046872">
    <property type="term" value="F:metal ion binding"/>
    <property type="evidence" value="ECO:0007669"/>
    <property type="project" value="UniProtKB-KW"/>
</dbReference>
<dbReference type="GO" id="GO:0008564">
    <property type="term" value="F:protein-exporting ATPase activity"/>
    <property type="evidence" value="ECO:0007669"/>
    <property type="project" value="UniProtKB-EC"/>
</dbReference>
<dbReference type="GO" id="GO:0065002">
    <property type="term" value="P:intracellular protein transmembrane transport"/>
    <property type="evidence" value="ECO:0007669"/>
    <property type="project" value="UniProtKB-UniRule"/>
</dbReference>
<dbReference type="GO" id="GO:0017038">
    <property type="term" value="P:protein import"/>
    <property type="evidence" value="ECO:0007669"/>
    <property type="project" value="InterPro"/>
</dbReference>
<dbReference type="GO" id="GO:0006605">
    <property type="term" value="P:protein targeting"/>
    <property type="evidence" value="ECO:0007669"/>
    <property type="project" value="UniProtKB-UniRule"/>
</dbReference>
<dbReference type="GO" id="GO:0043952">
    <property type="term" value="P:protein transport by the Sec complex"/>
    <property type="evidence" value="ECO:0007669"/>
    <property type="project" value="TreeGrafter"/>
</dbReference>
<dbReference type="CDD" id="cd17928">
    <property type="entry name" value="DEXDc_SecA"/>
    <property type="match status" value="1"/>
</dbReference>
<dbReference type="CDD" id="cd18803">
    <property type="entry name" value="SF2_C_secA"/>
    <property type="match status" value="1"/>
</dbReference>
<dbReference type="FunFam" id="3.40.50.300:FF:000429">
    <property type="entry name" value="Preprotein translocase subunit SecA"/>
    <property type="match status" value="1"/>
</dbReference>
<dbReference type="FunFam" id="3.90.1440.10:FF:000001">
    <property type="entry name" value="Preprotein translocase subunit SecA"/>
    <property type="match status" value="1"/>
</dbReference>
<dbReference type="FunFam" id="1.10.3060.10:FF:000012">
    <property type="entry name" value="Protein translocase subunit SecA"/>
    <property type="match status" value="1"/>
</dbReference>
<dbReference type="Gene3D" id="1.10.3060.10">
    <property type="entry name" value="Helical scaffold and wing domains of SecA"/>
    <property type="match status" value="1"/>
</dbReference>
<dbReference type="Gene3D" id="3.40.50.300">
    <property type="entry name" value="P-loop containing nucleotide triphosphate hydrolases"/>
    <property type="match status" value="3"/>
</dbReference>
<dbReference type="Gene3D" id="3.90.1440.10">
    <property type="entry name" value="SecA, preprotein cross-linking domain"/>
    <property type="match status" value="1"/>
</dbReference>
<dbReference type="HAMAP" id="MF_01382">
    <property type="entry name" value="SecA"/>
    <property type="match status" value="1"/>
</dbReference>
<dbReference type="InterPro" id="IPR014001">
    <property type="entry name" value="Helicase_ATP-bd"/>
</dbReference>
<dbReference type="InterPro" id="IPR001650">
    <property type="entry name" value="Helicase_C-like"/>
</dbReference>
<dbReference type="InterPro" id="IPR027417">
    <property type="entry name" value="P-loop_NTPase"/>
</dbReference>
<dbReference type="InterPro" id="IPR004027">
    <property type="entry name" value="SEC_C_motif"/>
</dbReference>
<dbReference type="InterPro" id="IPR000185">
    <property type="entry name" value="SecA"/>
</dbReference>
<dbReference type="InterPro" id="IPR020937">
    <property type="entry name" value="SecA_CS"/>
</dbReference>
<dbReference type="InterPro" id="IPR011115">
    <property type="entry name" value="SecA_DEAD"/>
</dbReference>
<dbReference type="InterPro" id="IPR014018">
    <property type="entry name" value="SecA_motor_DEAD"/>
</dbReference>
<dbReference type="InterPro" id="IPR011130">
    <property type="entry name" value="SecA_preprotein_X-link_dom"/>
</dbReference>
<dbReference type="InterPro" id="IPR044722">
    <property type="entry name" value="SecA_SF2_C"/>
</dbReference>
<dbReference type="InterPro" id="IPR011116">
    <property type="entry name" value="SecA_Wing/Scaffold"/>
</dbReference>
<dbReference type="InterPro" id="IPR036266">
    <property type="entry name" value="SecA_Wing/Scaffold_sf"/>
</dbReference>
<dbReference type="InterPro" id="IPR036670">
    <property type="entry name" value="SecA_X-link_sf"/>
</dbReference>
<dbReference type="NCBIfam" id="NF006630">
    <property type="entry name" value="PRK09200.1"/>
    <property type="match status" value="1"/>
</dbReference>
<dbReference type="NCBIfam" id="TIGR00963">
    <property type="entry name" value="secA"/>
    <property type="match status" value="1"/>
</dbReference>
<dbReference type="PANTHER" id="PTHR30612:SF0">
    <property type="entry name" value="CHLOROPLAST PROTEIN-TRANSPORTING ATPASE"/>
    <property type="match status" value="1"/>
</dbReference>
<dbReference type="PANTHER" id="PTHR30612">
    <property type="entry name" value="SECA INNER MEMBRANE COMPONENT OF SEC PROTEIN SECRETION SYSTEM"/>
    <property type="match status" value="1"/>
</dbReference>
<dbReference type="Pfam" id="PF21090">
    <property type="entry name" value="P-loop_SecA"/>
    <property type="match status" value="1"/>
</dbReference>
<dbReference type="Pfam" id="PF02810">
    <property type="entry name" value="SEC-C"/>
    <property type="match status" value="1"/>
</dbReference>
<dbReference type="Pfam" id="PF07517">
    <property type="entry name" value="SecA_DEAD"/>
    <property type="match status" value="1"/>
</dbReference>
<dbReference type="Pfam" id="PF01043">
    <property type="entry name" value="SecA_PP_bind"/>
    <property type="match status" value="1"/>
</dbReference>
<dbReference type="Pfam" id="PF07516">
    <property type="entry name" value="SecA_SW"/>
    <property type="match status" value="1"/>
</dbReference>
<dbReference type="PRINTS" id="PR00906">
    <property type="entry name" value="SECA"/>
</dbReference>
<dbReference type="SMART" id="SM00957">
    <property type="entry name" value="SecA_DEAD"/>
    <property type="match status" value="1"/>
</dbReference>
<dbReference type="SMART" id="SM00958">
    <property type="entry name" value="SecA_PP_bind"/>
    <property type="match status" value="1"/>
</dbReference>
<dbReference type="SUPFAM" id="SSF81886">
    <property type="entry name" value="Helical scaffold and wing domains of SecA"/>
    <property type="match status" value="1"/>
</dbReference>
<dbReference type="SUPFAM" id="SSF52540">
    <property type="entry name" value="P-loop containing nucleoside triphosphate hydrolases"/>
    <property type="match status" value="2"/>
</dbReference>
<dbReference type="SUPFAM" id="SSF81767">
    <property type="entry name" value="Pre-protein crosslinking domain of SecA"/>
    <property type="match status" value="1"/>
</dbReference>
<dbReference type="PROSITE" id="PS01312">
    <property type="entry name" value="SECA"/>
    <property type="match status" value="1"/>
</dbReference>
<dbReference type="PROSITE" id="PS51196">
    <property type="entry name" value="SECA_MOTOR_DEAD"/>
    <property type="match status" value="1"/>
</dbReference>
<proteinExistence type="inferred from homology"/>
<keyword id="KW-0067">ATP-binding</keyword>
<keyword id="KW-0997">Cell inner membrane</keyword>
<keyword id="KW-1003">Cell membrane</keyword>
<keyword id="KW-0963">Cytoplasm</keyword>
<keyword id="KW-0472">Membrane</keyword>
<keyword id="KW-0479">Metal-binding</keyword>
<keyword id="KW-0547">Nucleotide-binding</keyword>
<keyword id="KW-0653">Protein transport</keyword>
<keyword id="KW-1278">Translocase</keyword>
<keyword id="KW-0811">Translocation</keyword>
<keyword id="KW-0813">Transport</keyword>
<keyword id="KW-0862">Zinc</keyword>
<evidence type="ECO:0000255" key="1">
    <source>
        <dbReference type="HAMAP-Rule" id="MF_01382"/>
    </source>
</evidence>
<organism>
    <name type="scientific">Helicobacter pylori (strain Shi470)</name>
    <dbReference type="NCBI Taxonomy" id="512562"/>
    <lineage>
        <taxon>Bacteria</taxon>
        <taxon>Pseudomonadati</taxon>
        <taxon>Campylobacterota</taxon>
        <taxon>Epsilonproteobacteria</taxon>
        <taxon>Campylobacterales</taxon>
        <taxon>Helicobacteraceae</taxon>
        <taxon>Helicobacter</taxon>
    </lineage>
</organism>